<name>MDTI_ECO24</name>
<reference key="1">
    <citation type="journal article" date="2008" name="J. Bacteriol.">
        <title>The pangenome structure of Escherichia coli: comparative genomic analysis of E. coli commensal and pathogenic isolates.</title>
        <authorList>
            <person name="Rasko D.A."/>
            <person name="Rosovitz M.J."/>
            <person name="Myers G.S.A."/>
            <person name="Mongodin E.F."/>
            <person name="Fricke W.F."/>
            <person name="Gajer P."/>
            <person name="Crabtree J."/>
            <person name="Sebaihia M."/>
            <person name="Thomson N.R."/>
            <person name="Chaudhuri R."/>
            <person name="Henderson I.R."/>
            <person name="Sperandio V."/>
            <person name="Ravel J."/>
        </authorList>
    </citation>
    <scope>NUCLEOTIDE SEQUENCE [LARGE SCALE GENOMIC DNA]</scope>
    <source>
        <strain>E24377A / ETEC</strain>
    </source>
</reference>
<evidence type="ECO:0000255" key="1">
    <source>
        <dbReference type="HAMAP-Rule" id="MF_01597"/>
    </source>
</evidence>
<comment type="function">
    <text evidence="1">Catalyzes the excretion of spermidine.</text>
</comment>
<comment type="subunit">
    <text evidence="1">Forms a complex with MdtJ.</text>
</comment>
<comment type="subcellular location">
    <subcellularLocation>
        <location evidence="1">Cell inner membrane</location>
        <topology evidence="1">Multi-pass membrane protein</topology>
    </subcellularLocation>
</comment>
<comment type="similarity">
    <text evidence="1">Belongs to the drug/metabolite transporter (DMT) superfamily. Small multidrug resistance (SMR) (TC 2.A.7.1) family. MdtI subfamily.</text>
</comment>
<organism>
    <name type="scientific">Escherichia coli O139:H28 (strain E24377A / ETEC)</name>
    <dbReference type="NCBI Taxonomy" id="331111"/>
    <lineage>
        <taxon>Bacteria</taxon>
        <taxon>Pseudomonadati</taxon>
        <taxon>Pseudomonadota</taxon>
        <taxon>Gammaproteobacteria</taxon>
        <taxon>Enterobacterales</taxon>
        <taxon>Enterobacteriaceae</taxon>
        <taxon>Escherichia</taxon>
    </lineage>
</organism>
<gene>
    <name evidence="1" type="primary">mdtI</name>
    <name type="ordered locus">EcE24377A_1806</name>
</gene>
<proteinExistence type="inferred from homology"/>
<dbReference type="EMBL" id="CP000800">
    <property type="protein sequence ID" value="ABV17135.1"/>
    <property type="molecule type" value="Genomic_DNA"/>
</dbReference>
<dbReference type="RefSeq" id="WP_000046661.1">
    <property type="nucleotide sequence ID" value="NC_009801.1"/>
</dbReference>
<dbReference type="SMR" id="A7ZM58"/>
<dbReference type="GeneID" id="93775747"/>
<dbReference type="KEGG" id="ecw:EcE24377A_1806"/>
<dbReference type="HOGENOM" id="CLU_133067_0_4_6"/>
<dbReference type="Proteomes" id="UP000001122">
    <property type="component" value="Chromosome"/>
</dbReference>
<dbReference type="GO" id="GO:0005886">
    <property type="term" value="C:plasma membrane"/>
    <property type="evidence" value="ECO:0007669"/>
    <property type="project" value="UniProtKB-SubCell"/>
</dbReference>
<dbReference type="GO" id="GO:0015199">
    <property type="term" value="F:amino-acid betaine transmembrane transporter activity"/>
    <property type="evidence" value="ECO:0007669"/>
    <property type="project" value="TreeGrafter"/>
</dbReference>
<dbReference type="GO" id="GO:0015297">
    <property type="term" value="F:antiporter activity"/>
    <property type="evidence" value="ECO:0007669"/>
    <property type="project" value="TreeGrafter"/>
</dbReference>
<dbReference type="GO" id="GO:0015220">
    <property type="term" value="F:choline transmembrane transporter activity"/>
    <property type="evidence" value="ECO:0007669"/>
    <property type="project" value="TreeGrafter"/>
</dbReference>
<dbReference type="GO" id="GO:0015606">
    <property type="term" value="F:spermidine transmembrane transporter activity"/>
    <property type="evidence" value="ECO:0007669"/>
    <property type="project" value="UniProtKB-UniRule"/>
</dbReference>
<dbReference type="GO" id="GO:0031460">
    <property type="term" value="P:glycine betaine transport"/>
    <property type="evidence" value="ECO:0007669"/>
    <property type="project" value="TreeGrafter"/>
</dbReference>
<dbReference type="FunFam" id="1.10.3730.20:FF:000001">
    <property type="entry name" value="Quaternary ammonium compound resistance transporter SugE"/>
    <property type="match status" value="1"/>
</dbReference>
<dbReference type="Gene3D" id="1.10.3730.20">
    <property type="match status" value="1"/>
</dbReference>
<dbReference type="HAMAP" id="MF_01597">
    <property type="entry name" value="MdtI"/>
    <property type="match status" value="1"/>
</dbReference>
<dbReference type="InterPro" id="IPR000390">
    <property type="entry name" value="Small_drug/metabolite_transptr"/>
</dbReference>
<dbReference type="InterPro" id="IPR045324">
    <property type="entry name" value="Small_multidrug_res"/>
</dbReference>
<dbReference type="InterPro" id="IPR023737">
    <property type="entry name" value="Spermidine_export_MdtI"/>
</dbReference>
<dbReference type="NCBIfam" id="NF007934">
    <property type="entry name" value="PRK10650.1"/>
    <property type="match status" value="1"/>
</dbReference>
<dbReference type="PANTHER" id="PTHR30561">
    <property type="entry name" value="SMR FAMILY PROTON-DEPENDENT DRUG EFFLUX TRANSPORTER SUGE"/>
    <property type="match status" value="1"/>
</dbReference>
<dbReference type="PANTHER" id="PTHR30561:SF6">
    <property type="entry name" value="SPERMIDINE EXPORT PROTEIN MDTI"/>
    <property type="match status" value="1"/>
</dbReference>
<dbReference type="Pfam" id="PF00893">
    <property type="entry name" value="Multi_Drug_Res"/>
    <property type="match status" value="1"/>
</dbReference>
<dbReference type="SUPFAM" id="SSF103481">
    <property type="entry name" value="Multidrug resistance efflux transporter EmrE"/>
    <property type="match status" value="1"/>
</dbReference>
<accession>A7ZM58</accession>
<protein>
    <recommendedName>
        <fullName evidence="1">Spermidine export protein MdtI</fullName>
    </recommendedName>
</protein>
<sequence length="109" mass="11720">MAQFEWVHAAWLALAIVLEIVANVFLKFSDGFRRKIFGLLSLAAVLAAFSALSQAVKGIDLSVAYALWGGFGIAATLAAGWILFGQRLNRKGWIGLVLLLAGMIMVKLA</sequence>
<keyword id="KW-0997">Cell inner membrane</keyword>
<keyword id="KW-1003">Cell membrane</keyword>
<keyword id="KW-0472">Membrane</keyword>
<keyword id="KW-1185">Reference proteome</keyword>
<keyword id="KW-0812">Transmembrane</keyword>
<keyword id="KW-1133">Transmembrane helix</keyword>
<keyword id="KW-0813">Transport</keyword>
<feature type="chain" id="PRO_0000331138" description="Spermidine export protein MdtI">
    <location>
        <begin position="1"/>
        <end position="109"/>
    </location>
</feature>
<feature type="transmembrane region" description="Helical" evidence="1">
    <location>
        <begin position="6"/>
        <end position="26"/>
    </location>
</feature>
<feature type="transmembrane region" description="Helical" evidence="1">
    <location>
        <begin position="36"/>
        <end position="56"/>
    </location>
</feature>
<feature type="transmembrane region" description="Helical" evidence="1">
    <location>
        <begin position="64"/>
        <end position="84"/>
    </location>
</feature>
<feature type="transmembrane region" description="Helical" evidence="1">
    <location>
        <begin position="88"/>
        <end position="108"/>
    </location>
</feature>